<protein>
    <recommendedName>
        <fullName evidence="1">Probable septum site-determining protein MinC</fullName>
    </recommendedName>
</protein>
<accession>B7HE82</accession>
<keyword id="KW-0131">Cell cycle</keyword>
<keyword id="KW-0132">Cell division</keyword>
<keyword id="KW-0717">Septation</keyword>
<evidence type="ECO:0000255" key="1">
    <source>
        <dbReference type="HAMAP-Rule" id="MF_00267"/>
    </source>
</evidence>
<organism>
    <name type="scientific">Bacillus cereus (strain B4264)</name>
    <dbReference type="NCBI Taxonomy" id="405532"/>
    <lineage>
        <taxon>Bacteria</taxon>
        <taxon>Bacillati</taxon>
        <taxon>Bacillota</taxon>
        <taxon>Bacilli</taxon>
        <taxon>Bacillales</taxon>
        <taxon>Bacillaceae</taxon>
        <taxon>Bacillus</taxon>
        <taxon>Bacillus cereus group</taxon>
    </lineage>
</organism>
<feature type="chain" id="PRO_1000191233" description="Probable septum site-determining protein MinC">
    <location>
        <begin position="1"/>
        <end position="228"/>
    </location>
</feature>
<sequence length="228" mass="25174">MEEKKQQNVTIKGTKDGITLHLDDCCSFSELLMELDEKLSTHYYDGDGRSLIEVHVKVGNRYLTEVQQEEIRTLIRNKKNLVVDSIESDVITKAEAIAWKEETEIVPISKIVRSGQVLHVKGNLLLIGDVNPGGTVIAGGNIFVVGSLRGIAHAGYYGDSDAVIAASVMNPMQLRISDVAMRAPEEKEDGAEAAECAYINENNHIVVDRLQLLTHLRPNLTKLERGIV</sequence>
<comment type="function">
    <text evidence="1">Cell division inhibitor that blocks the formation of polar Z ring septums. Rapidly oscillates between the poles of the cell to destabilize FtsZ filaments that have formed before they mature into polar Z rings. Prevents FtsZ polymerization.</text>
</comment>
<comment type="subunit">
    <text evidence="1">Interacts with MinD and FtsZ.</text>
</comment>
<comment type="similarity">
    <text evidence="1">Belongs to the MinC family.</text>
</comment>
<dbReference type="EMBL" id="CP001176">
    <property type="protein sequence ID" value="ACK63310.1"/>
    <property type="molecule type" value="Genomic_DNA"/>
</dbReference>
<dbReference type="RefSeq" id="WP_000391521.1">
    <property type="nucleotide sequence ID" value="NZ_VEHB01000006.1"/>
</dbReference>
<dbReference type="SMR" id="B7HE82"/>
<dbReference type="GeneID" id="72451126"/>
<dbReference type="KEGG" id="bcb:BCB4264_A4568"/>
<dbReference type="HOGENOM" id="CLU_048711_1_1_9"/>
<dbReference type="Proteomes" id="UP000007096">
    <property type="component" value="Chromosome"/>
</dbReference>
<dbReference type="GO" id="GO:0000902">
    <property type="term" value="P:cell morphogenesis"/>
    <property type="evidence" value="ECO:0007669"/>
    <property type="project" value="InterPro"/>
</dbReference>
<dbReference type="GO" id="GO:0000917">
    <property type="term" value="P:division septum assembly"/>
    <property type="evidence" value="ECO:0007669"/>
    <property type="project" value="UniProtKB-KW"/>
</dbReference>
<dbReference type="GO" id="GO:1901891">
    <property type="term" value="P:regulation of cell septum assembly"/>
    <property type="evidence" value="ECO:0007669"/>
    <property type="project" value="InterPro"/>
</dbReference>
<dbReference type="FunFam" id="2.160.20.70:FF:000003">
    <property type="entry name" value="Probable septum site-determining protein MinC"/>
    <property type="match status" value="1"/>
</dbReference>
<dbReference type="FunFam" id="3.30.160.540:FF:000001">
    <property type="entry name" value="Probable septum site-determining protein MinC"/>
    <property type="match status" value="1"/>
</dbReference>
<dbReference type="Gene3D" id="2.160.20.70">
    <property type="match status" value="1"/>
</dbReference>
<dbReference type="Gene3D" id="3.30.160.540">
    <property type="match status" value="1"/>
</dbReference>
<dbReference type="HAMAP" id="MF_00267">
    <property type="entry name" value="MinC"/>
    <property type="match status" value="1"/>
</dbReference>
<dbReference type="InterPro" id="IPR016098">
    <property type="entry name" value="CAP/MinC_C"/>
</dbReference>
<dbReference type="InterPro" id="IPR013033">
    <property type="entry name" value="MinC"/>
</dbReference>
<dbReference type="InterPro" id="IPR036145">
    <property type="entry name" value="MinC_C_sf"/>
</dbReference>
<dbReference type="InterPro" id="IPR055219">
    <property type="entry name" value="MinC_N_1"/>
</dbReference>
<dbReference type="InterPro" id="IPR005526">
    <property type="entry name" value="Septum_form_inhib_MinC_C"/>
</dbReference>
<dbReference type="NCBIfam" id="TIGR01222">
    <property type="entry name" value="minC"/>
    <property type="match status" value="1"/>
</dbReference>
<dbReference type="PANTHER" id="PTHR34108">
    <property type="entry name" value="SEPTUM SITE-DETERMINING PROTEIN MINC"/>
    <property type="match status" value="1"/>
</dbReference>
<dbReference type="PANTHER" id="PTHR34108:SF1">
    <property type="entry name" value="SEPTUM SITE-DETERMINING PROTEIN MINC"/>
    <property type="match status" value="1"/>
</dbReference>
<dbReference type="Pfam" id="PF03775">
    <property type="entry name" value="MinC_C"/>
    <property type="match status" value="1"/>
</dbReference>
<dbReference type="Pfam" id="PF22642">
    <property type="entry name" value="MinC_N_1"/>
    <property type="match status" value="1"/>
</dbReference>
<dbReference type="SUPFAM" id="SSF63848">
    <property type="entry name" value="Cell-division inhibitor MinC, C-terminal domain"/>
    <property type="match status" value="1"/>
</dbReference>
<proteinExistence type="inferred from homology"/>
<gene>
    <name evidence="1" type="primary">minC</name>
    <name type="ordered locus">BCB4264_A4568</name>
</gene>
<name>MINC_BACC4</name>
<reference key="1">
    <citation type="submission" date="2008-10" db="EMBL/GenBank/DDBJ databases">
        <title>Genome sequence of Bacillus cereus B4264.</title>
        <authorList>
            <person name="Dodson R.J."/>
            <person name="Durkin A.S."/>
            <person name="Rosovitz M.J."/>
            <person name="Rasko D.A."/>
            <person name="Hoffmaster A."/>
            <person name="Ravel J."/>
            <person name="Sutton G."/>
        </authorList>
    </citation>
    <scope>NUCLEOTIDE SEQUENCE [LARGE SCALE GENOMIC DNA]</scope>
    <source>
        <strain>B4264</strain>
    </source>
</reference>